<keyword id="KW-0325">Glycoprotein</keyword>
<keyword id="KW-0378">Hydrolase</keyword>
<keyword id="KW-0964">Secreted</keyword>
<keyword id="KW-0719">Serine esterase</keyword>
<keyword id="KW-0732">Signal</keyword>
<keyword id="KW-0879">Wnt signaling pathway</keyword>
<evidence type="ECO:0000250" key="1">
    <source>
        <dbReference type="UniProtKB" id="Q6P988"/>
    </source>
</evidence>
<evidence type="ECO:0000250" key="2">
    <source>
        <dbReference type="UniProtKB" id="Q9VUX3"/>
    </source>
</evidence>
<evidence type="ECO:0000255" key="3"/>
<evidence type="ECO:0000255" key="4">
    <source>
        <dbReference type="PROSITE-ProRule" id="PRU00498"/>
    </source>
</evidence>
<evidence type="ECO:0000269" key="5">
    <source>
    </source>
</evidence>
<evidence type="ECO:0000303" key="6">
    <source>
    </source>
</evidence>
<evidence type="ECO:0000305" key="7"/>
<evidence type="ECO:0000312" key="8">
    <source>
        <dbReference type="EMBL" id="AEF01556.1"/>
    </source>
</evidence>
<sequence length="527" mass="60852">MKSYLILNTLLLSLLKINGFSKSSWFSSKTSLIFDRINKLNDPQSSNSIHSRKYQYFQLKKFPNSTNVRCNDGSIPGYYTRPSTTNCSKKWLIFLEGGWYCFNNNTCESRRRTHYDLFSSEFWSSERQLGGILSNNERINPNFHDYNSVYIPYCSSDLWSGKQLEKTNGLYFHGSRILDTVVDDLTQNQHFKKVHEVAFVGSSAGGIGVLLNIDRLKRRLKKKLKRKVFIHGIVDSAWFLDYPAYRQSNCTHIYECPPENALRNGMKLWNPRIPRRCKKFQGRGREWKCFMGPVIYRHLKNPTFIIQSLFDDAQLQMSKVPILEGGSNKKFSYIQQLGGFAAQTLRQAKGVFAHSCVDHEILTKSNWAYVSVNNQRLHETLNYWQAYLEGEKKKIKKKVQKNPKLIKTGKSPCKNLRKPKFSGNIDQSKYQLIDSCHISQITSYKIQLPHNRTLSRCANAIPLIPLCNPTCSPLSHPISGLSMSFIDLLELYNVRINLIAKSLGISMEQLRKMNTQQQISLLYCSSR</sequence>
<comment type="function">
    <text evidence="1 5">Carboxylesterase that acts as a key negative regulator of the Wnt signaling pathway (PubMed:21566195). Acts by specifically mediating depalmitoleoylation of WNT proteins. Serine palmitoleoylation of WNT proteins is required for efficient binding to frizzled receptors (By similarity). Promotes head regeneration following amputation by inhibiting the Wnt signaling pathway.</text>
</comment>
<comment type="catalytic activity">
    <reaction evidence="1">
        <text>[Wnt protein]-O-(9Z)-hexadecenoyl-L-serine + H2O = [Wnt protein]-L-serine + (9Z)-hexadecenoate + H(+)</text>
        <dbReference type="Rhea" id="RHEA:45340"/>
        <dbReference type="Rhea" id="RHEA-COMP:11170"/>
        <dbReference type="Rhea" id="RHEA-COMP:11171"/>
        <dbReference type="ChEBI" id="CHEBI:15377"/>
        <dbReference type="ChEBI" id="CHEBI:15378"/>
        <dbReference type="ChEBI" id="CHEBI:29999"/>
        <dbReference type="ChEBI" id="CHEBI:32372"/>
        <dbReference type="ChEBI" id="CHEBI:85189"/>
        <dbReference type="EC" id="3.1.1.98"/>
    </reaction>
</comment>
<comment type="subcellular location">
    <subcellularLocation>
        <location evidence="2">Secreted</location>
    </subcellularLocation>
</comment>
<comment type="tissue specificity">
    <text evidence="5">Expressed in the anterior pole.</text>
</comment>
<comment type="induction">
    <text evidence="5">Strongly up-regulated near anterior-facing wounds following head and tail amputation.</text>
</comment>
<comment type="similarity">
    <text evidence="7">Belongs to the pectinacetylesterase family. Notum subfamily.</text>
</comment>
<reference key="1">
    <citation type="journal article" date="2011" name="Science">
        <title>Polarized notum activation at wounds inhibits Wnt function to promote planarian head regeneration.</title>
        <authorList>
            <person name="Petersen C.P."/>
            <person name="Reddien P.W."/>
        </authorList>
    </citation>
    <scope>NUCLEOTIDE SEQUENCE [MRNA]</scope>
    <scope>FUNCTION</scope>
    <scope>TISSUE SPECIFICITY</scope>
    <scope>INDUCTION</scope>
</reference>
<proteinExistence type="evidence at transcript level"/>
<feature type="signal peptide" evidence="3">
    <location>
        <begin position="1"/>
        <end position="19"/>
    </location>
</feature>
<feature type="chain" id="PRO_0000432995" description="Palmitoleoyl-protein carboxylesterase NOTUM">
    <location>
        <begin position="20"/>
        <end position="527"/>
    </location>
</feature>
<feature type="active site" description="Charge relay system" evidence="1">
    <location>
        <position position="203"/>
    </location>
</feature>
<feature type="active site" description="Charge relay system" evidence="1">
    <location>
        <position position="311"/>
    </location>
</feature>
<feature type="active site" description="Charge relay system" evidence="1">
    <location>
        <position position="359"/>
    </location>
</feature>
<feature type="glycosylation site" description="N-linked (GlcNAc...) asparagine" evidence="4">
    <location>
        <position position="64"/>
    </location>
</feature>
<feature type="glycosylation site" description="N-linked (GlcNAc...) asparagine" evidence="4">
    <location>
        <position position="86"/>
    </location>
</feature>
<feature type="glycosylation site" description="N-linked (GlcNAc...) asparagine" evidence="4">
    <location>
        <position position="104"/>
    </location>
</feature>
<feature type="glycosylation site" description="N-linked (GlcNAc...) asparagine" evidence="4">
    <location>
        <position position="249"/>
    </location>
</feature>
<feature type="glycosylation site" description="N-linked (GlcNAc...) asparagine" evidence="4">
    <location>
        <position position="451"/>
    </location>
</feature>
<accession>F8U830</accession>
<dbReference type="EC" id="3.1.1.98" evidence="1"/>
<dbReference type="EMBL" id="JF725701">
    <property type="protein sequence ID" value="AEF01556.1"/>
    <property type="molecule type" value="mRNA"/>
</dbReference>
<dbReference type="SMR" id="F8U830"/>
<dbReference type="ESTHER" id="schmd-f8u830">
    <property type="family name" value="Pectinacetylesterase-Notum"/>
</dbReference>
<dbReference type="GlyCosmos" id="F8U830">
    <property type="glycosylation" value="5 sites, No reported glycans"/>
</dbReference>
<dbReference type="OrthoDB" id="2015280at2759"/>
<dbReference type="BRENDA" id="3.1.1.98">
    <property type="organism ID" value="12164"/>
</dbReference>
<dbReference type="GO" id="GO:0005576">
    <property type="term" value="C:extracellular region"/>
    <property type="evidence" value="ECO:0007669"/>
    <property type="project" value="UniProtKB-SubCell"/>
</dbReference>
<dbReference type="GO" id="GO:1990699">
    <property type="term" value="F:palmitoleyl hydrolase activity"/>
    <property type="evidence" value="ECO:0000250"/>
    <property type="project" value="UniProtKB"/>
</dbReference>
<dbReference type="GO" id="GO:0030178">
    <property type="term" value="P:negative regulation of Wnt signaling pathway"/>
    <property type="evidence" value="ECO:0000250"/>
    <property type="project" value="UniProtKB"/>
</dbReference>
<dbReference type="GO" id="GO:1990697">
    <property type="term" value="P:protein depalmitoleylation"/>
    <property type="evidence" value="ECO:0000250"/>
    <property type="project" value="UniProtKB"/>
</dbReference>
<dbReference type="GO" id="GO:0016055">
    <property type="term" value="P:Wnt signaling pathway"/>
    <property type="evidence" value="ECO:0007669"/>
    <property type="project" value="UniProtKB-KW"/>
</dbReference>
<dbReference type="InterPro" id="IPR004963">
    <property type="entry name" value="PAE/NOTUM"/>
</dbReference>
<dbReference type="PANTHER" id="PTHR21562">
    <property type="entry name" value="NOTUM-RELATED"/>
    <property type="match status" value="1"/>
</dbReference>
<dbReference type="PANTHER" id="PTHR21562:SF122">
    <property type="entry name" value="PALMITOLEOYL-PROTEIN CARBOXYLESTERASE NOTUM"/>
    <property type="match status" value="1"/>
</dbReference>
<dbReference type="Pfam" id="PF03283">
    <property type="entry name" value="PAE"/>
    <property type="match status" value="1"/>
</dbReference>
<organism evidence="8">
    <name type="scientific">Schmidtea mediterranea</name>
    <name type="common">Freshwater planarian flatworm</name>
    <dbReference type="NCBI Taxonomy" id="79327"/>
    <lineage>
        <taxon>Eukaryota</taxon>
        <taxon>Metazoa</taxon>
        <taxon>Spiralia</taxon>
        <taxon>Lophotrochozoa</taxon>
        <taxon>Platyhelminthes</taxon>
        <taxon>Rhabditophora</taxon>
        <taxon>Seriata</taxon>
        <taxon>Tricladida</taxon>
        <taxon>Continenticola</taxon>
        <taxon>Geoplanoidea</taxon>
        <taxon>Dugesiidae</taxon>
        <taxon>Schmidtea</taxon>
    </lineage>
</organism>
<name>NOTUM_SCHMD</name>
<protein>
    <recommendedName>
        <fullName evidence="1">Palmitoleoyl-protein carboxylesterase NOTUM</fullName>
        <shortName evidence="6">Smed-notum</shortName>
        <ecNumber evidence="1">3.1.1.98</ecNumber>
    </recommendedName>
</protein>
<gene>
    <name evidence="6" type="primary">notum</name>
</gene>